<reference key="1">
    <citation type="journal article" date="2010" name="Zoology">
        <title>Transcriptome analysis of the venom glands of the Chinese wolf spider Lycosa singoriensis.</title>
        <authorList>
            <person name="Zhang Y."/>
            <person name="Chen J."/>
            <person name="Tang X."/>
            <person name="Wang F."/>
            <person name="Jiang L."/>
            <person name="Xiong X."/>
            <person name="Wang M."/>
            <person name="Rong M."/>
            <person name="Liu Z."/>
            <person name="Liang S."/>
        </authorList>
    </citation>
    <scope>NUCLEOTIDE SEQUENCE [LARGE SCALE MRNA]</scope>
    <source>
        <tissue>Venom gland</tissue>
    </source>
</reference>
<organism>
    <name type="scientific">Lycosa singoriensis</name>
    <name type="common">Wolf spider</name>
    <name type="synonym">Aranea singoriensis</name>
    <dbReference type="NCBI Taxonomy" id="434756"/>
    <lineage>
        <taxon>Eukaryota</taxon>
        <taxon>Metazoa</taxon>
        <taxon>Ecdysozoa</taxon>
        <taxon>Arthropoda</taxon>
        <taxon>Chelicerata</taxon>
        <taxon>Arachnida</taxon>
        <taxon>Araneae</taxon>
        <taxon>Araneomorphae</taxon>
        <taxon>Entelegynae</taxon>
        <taxon>Lycosoidea</taxon>
        <taxon>Lycosidae</taxon>
        <taxon>Lycosa</taxon>
    </lineage>
</organism>
<evidence type="ECO:0000250" key="1"/>
<evidence type="ECO:0000255" key="2"/>
<evidence type="ECO:0000305" key="3"/>
<accession>B6DCZ8</accession>
<name>TX827_LYCSI</name>
<feature type="signal peptide" evidence="2">
    <location>
        <begin position="1"/>
        <end position="20"/>
    </location>
</feature>
<feature type="propeptide" id="PRO_0000401815" evidence="1">
    <location>
        <begin position="21"/>
        <end position="26"/>
    </location>
</feature>
<feature type="chain" id="PRO_0000401816" description="U8-lycotoxin-Ls1m">
    <location>
        <begin position="27"/>
        <end position="77"/>
    </location>
</feature>
<dbReference type="EMBL" id="EU926082">
    <property type="protein sequence ID" value="ACI41414.1"/>
    <property type="molecule type" value="mRNA"/>
</dbReference>
<dbReference type="EMBL" id="FM864086">
    <property type="protein sequence ID" value="CAS03683.1"/>
    <property type="molecule type" value="mRNA"/>
</dbReference>
<dbReference type="SMR" id="B6DCZ8"/>
<dbReference type="ArachnoServer" id="AS001016">
    <property type="toxin name" value="U8-lycotoxin-Ls1m"/>
</dbReference>
<dbReference type="GO" id="GO:0005576">
    <property type="term" value="C:extracellular region"/>
    <property type="evidence" value="ECO:0007669"/>
    <property type="project" value="UniProtKB-SubCell"/>
</dbReference>
<dbReference type="GO" id="GO:0090729">
    <property type="term" value="F:toxin activity"/>
    <property type="evidence" value="ECO:0007669"/>
    <property type="project" value="UniProtKB-KW"/>
</dbReference>
<dbReference type="InterPro" id="IPR019553">
    <property type="entry name" value="Spider_toxin_CSTX_knottin"/>
</dbReference>
<dbReference type="Pfam" id="PF10530">
    <property type="entry name" value="Toxin_35"/>
    <property type="match status" value="1"/>
</dbReference>
<proteinExistence type="evidence at transcript level"/>
<protein>
    <recommendedName>
        <fullName>U8-lycotoxin-Ls1m</fullName>
    </recommendedName>
    <alternativeName>
        <fullName>Toxin-like structure LSTX-H27</fullName>
    </alternativeName>
</protein>
<comment type="subcellular location">
    <subcellularLocation>
        <location evidence="1">Secreted</location>
    </subcellularLocation>
</comment>
<comment type="tissue specificity">
    <text>Expressed by the venom gland.</text>
</comment>
<comment type="PTM">
    <text evidence="1">Contains 4 disulfide bonds.</text>
</comment>
<comment type="similarity">
    <text evidence="3">Belongs to the neurotoxin 19 (CSTX) family. 08 (U8-Lctx) subfamily.</text>
</comment>
<sequence>MKLMIFTGLFLFAIVSLIEAQAENEKPCLPEYKVCTHAPGNCCSDLVCDCYGRYKSGAQIGRNCFCLQKGVIYKREN</sequence>
<keyword id="KW-1015">Disulfide bond</keyword>
<keyword id="KW-0964">Secreted</keyword>
<keyword id="KW-0732">Signal</keyword>
<keyword id="KW-0800">Toxin</keyword>